<protein>
    <recommendedName>
        <fullName evidence="2">Mitochondrial amidoxime-reducing component 1</fullName>
        <shortName evidence="2">mARC1</shortName>
        <ecNumber evidence="2">1.7.-.-</ecNumber>
    </recommendedName>
</protein>
<feature type="chain" id="PRO_0000273338" description="Mitochondrial amidoxime-reducing component 1">
    <location>
        <begin position="1"/>
        <end position="343"/>
    </location>
</feature>
<feature type="topological domain" description="Mitochondrial matrix" evidence="1">
    <location>
        <begin position="1"/>
        <end position="25"/>
    </location>
</feature>
<feature type="transmembrane region" description="Helical; Signal-anchor for type II membrane protein" evidence="3">
    <location>
        <begin position="26"/>
        <end position="44"/>
    </location>
</feature>
<feature type="topological domain" description="Cytoplasmic" evidence="1">
    <location>
        <begin position="45"/>
        <end position="343"/>
    </location>
</feature>
<feature type="domain" description="MOSC" evidence="4">
    <location>
        <begin position="181"/>
        <end position="339"/>
    </location>
</feature>
<feature type="region of interest" description="MOSC N-terminal region" evidence="2">
    <location>
        <begin position="95"/>
        <end position="186"/>
    </location>
</feature>
<feature type="binding site" evidence="2">
    <location>
        <position position="69"/>
    </location>
    <ligand>
        <name>Mo-molybdopterin</name>
        <dbReference type="ChEBI" id="CHEBI:71302"/>
    </ligand>
</feature>
<feature type="binding site" evidence="2">
    <location>
        <position position="70"/>
    </location>
    <ligand>
        <name>Mo-molybdopterin</name>
        <dbReference type="ChEBI" id="CHEBI:71302"/>
    </ligand>
</feature>
<feature type="binding site" evidence="2">
    <location>
        <position position="94"/>
    </location>
    <ligand>
        <name>Mo-molybdopterin</name>
        <dbReference type="ChEBI" id="CHEBI:71302"/>
    </ligand>
</feature>
<feature type="binding site" evidence="2">
    <location>
        <position position="215"/>
    </location>
    <ligand>
        <name>Mo-molybdopterin</name>
        <dbReference type="ChEBI" id="CHEBI:71302"/>
    </ligand>
</feature>
<feature type="binding site" evidence="2">
    <location>
        <position position="242"/>
    </location>
    <ligand>
        <name>Mo-molybdopterin</name>
        <dbReference type="ChEBI" id="CHEBI:71302"/>
    </ligand>
</feature>
<feature type="binding site" evidence="2">
    <location>
        <position position="276"/>
    </location>
    <ligand>
        <name>Mo-molybdopterin</name>
        <dbReference type="ChEBI" id="CHEBI:71302"/>
    </ligand>
</feature>
<feature type="binding site" evidence="2">
    <location>
        <position position="277"/>
    </location>
    <ligand>
        <name>Mo-molybdopterin</name>
        <dbReference type="ChEBI" id="CHEBI:71302"/>
    </ligand>
    <ligandPart>
        <name>Mo</name>
        <dbReference type="ChEBI" id="CHEBI:28685"/>
    </ligandPart>
</feature>
<feature type="binding site" evidence="2">
    <location>
        <position position="321"/>
    </location>
    <ligand>
        <name>Mo-molybdopterin</name>
        <dbReference type="ChEBI" id="CHEBI:71302"/>
    </ligand>
</feature>
<proteinExistence type="evidence at transcript level"/>
<organism>
    <name type="scientific">Xenopus laevis</name>
    <name type="common">African clawed frog</name>
    <dbReference type="NCBI Taxonomy" id="8355"/>
    <lineage>
        <taxon>Eukaryota</taxon>
        <taxon>Metazoa</taxon>
        <taxon>Chordata</taxon>
        <taxon>Craniata</taxon>
        <taxon>Vertebrata</taxon>
        <taxon>Euteleostomi</taxon>
        <taxon>Amphibia</taxon>
        <taxon>Batrachia</taxon>
        <taxon>Anura</taxon>
        <taxon>Pipoidea</taxon>
        <taxon>Pipidae</taxon>
        <taxon>Xenopodinae</taxon>
        <taxon>Xenopus</taxon>
        <taxon>Xenopus</taxon>
    </lineage>
</organism>
<sequence length="343" mass="38221">MSNTVFSGAVGPLRAAALSISRHRLPLLCAAGLGLTAVASWMWWRKRQGEAEDLQQVGIVSQLLIYPVKSCRAVPVQEAECSALGLKSGHLEDRHWLVVTEEGNMVTARQEPRMVLISATFCGNTLCLNGPEMQEVQIPLPLPKSNRVLDCRVFGQDIQGRDSGEQASEWLATYFQSSQPYRLVHFEADVMRPRQSKKKEKLFRDKDVIAYPDASPIMLLSETSMEALNSRLEQPVSLANFRPCIVASGCEAFAEDDWDDVRLGATRLKRVMACGRCVLTTVNPNSGVITRKEPLDTLRTFRQSDSSLKEVYKNAPLFGQYYGVEQTGIIRVGDPVYRVTRKG</sequence>
<evidence type="ECO:0000250" key="1"/>
<evidence type="ECO:0000250" key="2">
    <source>
        <dbReference type="UniProtKB" id="Q5VT66"/>
    </source>
</evidence>
<evidence type="ECO:0000255" key="3"/>
<evidence type="ECO:0000255" key="4">
    <source>
        <dbReference type="PROSITE-ProRule" id="PRU00670"/>
    </source>
</evidence>
<comment type="function">
    <text evidence="2">Catalyzes the reduction of N-oxygenated molecules, acting as a counterpart of cytochrome P450 and flavin-containing monooxygenases in metabolic cycles. As a component of prodrug-converting system, reduces a multitude of N-hydroxylated prodrugs particularly amidoximes, leading to increased drug bioavailability. May be involved in mitochondrial N(omega)-hydroxy-L-arginine (NOHA) reduction, regulating endogenous nitric oxide levels and biosynthesis. Postulated to cleave the N-OH bond of N-hydroxylated substrates in concert with electron transfer from NADH to cytochrome b5 reductase then to cytochrome b5, the ultimate electron donor that primes the active site for substrate reduction.</text>
</comment>
<comment type="catalytic activity">
    <reaction evidence="2">
        <text>N(omega)-hydroxy-L-arginine + 2 Fe(II)-[cytochrome b5] + 2 H(+) = L-arginine + 2 Fe(III)-[cytochrome b5] + H2O</text>
        <dbReference type="Rhea" id="RHEA:61644"/>
        <dbReference type="Rhea" id="RHEA-COMP:10438"/>
        <dbReference type="Rhea" id="RHEA-COMP:10439"/>
        <dbReference type="ChEBI" id="CHEBI:15377"/>
        <dbReference type="ChEBI" id="CHEBI:15378"/>
        <dbReference type="ChEBI" id="CHEBI:29033"/>
        <dbReference type="ChEBI" id="CHEBI:29034"/>
        <dbReference type="ChEBI" id="CHEBI:32682"/>
        <dbReference type="ChEBI" id="CHEBI:60107"/>
    </reaction>
    <physiologicalReaction direction="left-to-right" evidence="2">
        <dbReference type="Rhea" id="RHEA:61645"/>
    </physiologicalReaction>
</comment>
<comment type="cofactor">
    <cofactor evidence="2">
        <name>Mo-molybdopterin</name>
        <dbReference type="ChEBI" id="CHEBI:71302"/>
    </cofactor>
    <text evidence="2">Binds 1 Mo-molybdopterin (Mo-MPT) cofactor per subunit.</text>
</comment>
<comment type="subcellular location">
    <subcellularLocation>
        <location evidence="2">Mitochondrion outer membrane</location>
        <topology evidence="2">Single-pass type II membrane protein</topology>
    </subcellularLocation>
    <subcellularLocation>
        <location evidence="2">Membrane</location>
        <topology evidence="2">Lipid-anchor</topology>
    </subcellularLocation>
    <text evidence="2">Mitochondrial import is mediated by AA 1-44 and requires ATP.</text>
</comment>
<comment type="domain">
    <text evidence="2">Comprises two structural domains, the molybdenum cofactor/Moco sulfurase C-terminal (MOSC) domain and the MOSC N-terminal region, forming a cleft that accommodates Moco. The MOSC domain, which contains a large seven-stranded mostly antiparallel beta-barrel, engages multiple interactions with Moco both pterin ring and phosphate group, allowing for a tight coordination of Moco within the core of the enzyme.</text>
</comment>
<gene>
    <name type="primary">mtarc1</name>
    <name type="synonym">marc1</name>
</gene>
<reference key="1">
    <citation type="submission" date="2004-10" db="EMBL/GenBank/DDBJ databases">
        <authorList>
            <consortium name="NIH - Xenopus Gene Collection (XGC) project"/>
        </authorList>
    </citation>
    <scope>NUCLEOTIDE SEQUENCE [LARGE SCALE MRNA]</scope>
</reference>
<dbReference type="EC" id="1.7.-.-" evidence="2"/>
<dbReference type="EMBL" id="BC084850">
    <property type="protein sequence ID" value="AAH84850.1"/>
    <property type="molecule type" value="mRNA"/>
</dbReference>
<dbReference type="RefSeq" id="NP_001088512.1">
    <property type="nucleotide sequence ID" value="NM_001095043.2"/>
</dbReference>
<dbReference type="SMR" id="Q5U534"/>
<dbReference type="DNASU" id="495382"/>
<dbReference type="GeneID" id="495382"/>
<dbReference type="KEGG" id="xla:495382"/>
<dbReference type="AGR" id="Xenbase:XB-GENE-5823412"/>
<dbReference type="CTD" id="495382"/>
<dbReference type="Xenbase" id="XB-GENE-5823412">
    <property type="gene designation" value="mtarc1.S"/>
</dbReference>
<dbReference type="OrthoDB" id="17255at2759"/>
<dbReference type="Proteomes" id="UP000186698">
    <property type="component" value="Chromosome 1S"/>
</dbReference>
<dbReference type="Bgee" id="495382">
    <property type="expression patterns" value="Expressed in liver and 20 other cell types or tissues"/>
</dbReference>
<dbReference type="GO" id="GO:0005743">
    <property type="term" value="C:mitochondrial inner membrane"/>
    <property type="evidence" value="ECO:0007669"/>
    <property type="project" value="TreeGrafter"/>
</dbReference>
<dbReference type="GO" id="GO:0005741">
    <property type="term" value="C:mitochondrial outer membrane"/>
    <property type="evidence" value="ECO:0007669"/>
    <property type="project" value="UniProtKB-SubCell"/>
</dbReference>
<dbReference type="GO" id="GO:0030151">
    <property type="term" value="F:molybdenum ion binding"/>
    <property type="evidence" value="ECO:0000318"/>
    <property type="project" value="GO_Central"/>
</dbReference>
<dbReference type="GO" id="GO:0043546">
    <property type="term" value="F:molybdopterin cofactor binding"/>
    <property type="evidence" value="ECO:0000318"/>
    <property type="project" value="GO_Central"/>
</dbReference>
<dbReference type="GO" id="GO:0008940">
    <property type="term" value="F:nitrate reductase activity"/>
    <property type="evidence" value="ECO:0000318"/>
    <property type="project" value="GO_Central"/>
</dbReference>
<dbReference type="GO" id="GO:0030170">
    <property type="term" value="F:pyridoxal phosphate binding"/>
    <property type="evidence" value="ECO:0007669"/>
    <property type="project" value="InterPro"/>
</dbReference>
<dbReference type="GO" id="GO:0042126">
    <property type="term" value="P:nitrate metabolic process"/>
    <property type="evidence" value="ECO:0000318"/>
    <property type="project" value="GO_Central"/>
</dbReference>
<dbReference type="InterPro" id="IPR005302">
    <property type="entry name" value="MoCF_Sase_C"/>
</dbReference>
<dbReference type="InterPro" id="IPR005303">
    <property type="entry name" value="MOCOS_middle"/>
</dbReference>
<dbReference type="InterPro" id="IPR011037">
    <property type="entry name" value="Pyrv_Knase-like_insert_dom_sf"/>
</dbReference>
<dbReference type="PANTHER" id="PTHR14237:SF93">
    <property type="entry name" value="MITOCHONDRIAL AMIDOXIME-REDUCING COMPONENT 1"/>
    <property type="match status" value="1"/>
</dbReference>
<dbReference type="PANTHER" id="PTHR14237">
    <property type="entry name" value="MOLYBDOPTERIN COFACTOR SULFURASE MOSC"/>
    <property type="match status" value="1"/>
</dbReference>
<dbReference type="Pfam" id="PF03473">
    <property type="entry name" value="MOSC"/>
    <property type="match status" value="1"/>
</dbReference>
<dbReference type="Pfam" id="PF03476">
    <property type="entry name" value="MOSC_N"/>
    <property type="match status" value="1"/>
</dbReference>
<dbReference type="SUPFAM" id="SSF141673">
    <property type="entry name" value="MOSC N-terminal domain-like"/>
    <property type="match status" value="1"/>
</dbReference>
<dbReference type="SUPFAM" id="SSF50800">
    <property type="entry name" value="PK beta-barrel domain-like"/>
    <property type="match status" value="1"/>
</dbReference>
<dbReference type="PROSITE" id="PS51340">
    <property type="entry name" value="MOSC"/>
    <property type="match status" value="1"/>
</dbReference>
<name>MARC1_XENLA</name>
<keyword id="KW-0449">Lipoprotein</keyword>
<keyword id="KW-0472">Membrane</keyword>
<keyword id="KW-0479">Metal-binding</keyword>
<keyword id="KW-0496">Mitochondrion</keyword>
<keyword id="KW-1000">Mitochondrion outer membrane</keyword>
<keyword id="KW-0500">Molybdenum</keyword>
<keyword id="KW-0560">Oxidoreductase</keyword>
<keyword id="KW-1185">Reference proteome</keyword>
<keyword id="KW-0735">Signal-anchor</keyword>
<keyword id="KW-0812">Transmembrane</keyword>
<keyword id="KW-1133">Transmembrane helix</keyword>
<accession>Q5U534</accession>